<protein>
    <recommendedName>
        <fullName>Ribonuclease P protein subunit p30</fullName>
        <shortName>RNaseP protein p30</shortName>
    </recommendedName>
    <alternativeName>
        <fullName>RNase P subunit 2</fullName>
    </alternativeName>
</protein>
<comment type="function">
    <text evidence="4 5 6 7">Component of ribonuclease P, a ribonucleoprotein complex that generates mature tRNA molecules by cleaving their 5'-ends (PubMed:30454648, PubMed:9037013, PubMed:9630247). Also a component of the MRP ribonuclease complex, which cleaves pre-rRNA sequences (PubMed:28115465).</text>
</comment>
<comment type="subunit">
    <text evidence="2 4 5 6 7">Component of nuclear RNase P and RNase MRP ribonucleoproteins (PubMed:16723659, PubMed:30454648, PubMed:9037013, PubMed:9630247). RNase P consists of a catalytic RNA moiety and about 10 protein subunits; POP1, POP4, POP5, POP7, RPP14, RPP21, RPP25, RPP30, RPP38 and RPP40 (PubMed:16723659, PubMed:30454648, PubMed:9037013, PubMed:9630247). Within the RNase P complex, POP1, POP7 and RPP25 form the 'finger' subcomplex, POP5, RPP14, RPP40 and homodimeric RPP30 form the 'palm' subcomplex, and RPP21, POP4 and RPP38 form the 'wrist' subcomplex. All subunits of the RNase P complex interact with the catalytic RNA (PubMed:30454648). Several subunits of RNase P are also part of the RNase MRP complex. RNase MRP consists of a catalytic RNA moiety and about 8 protein subunits; POP1, POP7, RPP25, RPP30, RPP38, RPP40 and possibly also POP4 and POP5 (PubMed:16723659, PubMed:28115465).</text>
</comment>
<comment type="interaction">
    <interactant intactId="EBI-366553">
        <id>P78346</id>
    </interactant>
    <interactant intactId="EBI-740641">
        <id>Q9NP66</id>
        <label>HMG20A</label>
    </interactant>
    <organismsDiffer>false</organismsDiffer>
    <experiments>11</experiments>
</comment>
<comment type="interaction">
    <interactant intactId="EBI-366553">
        <id>P78346</id>
    </interactant>
    <interactant intactId="EBI-366525">
        <id>Q969H6</id>
        <label>POP5</label>
    </interactant>
    <organismsDiffer>false</organismsDiffer>
    <experiments>9</experiments>
</comment>
<comment type="interaction">
    <interactant intactId="EBI-366553">
        <id>P78346</id>
    </interactant>
    <interactant intactId="EBI-366542">
        <id>O95059</id>
        <label>RPP14</label>
    </interactant>
    <organismsDiffer>false</organismsDiffer>
    <experiments>8</experiments>
</comment>
<comment type="subcellular location">
    <subcellularLocation>
        <location evidence="10">Nucleus</location>
        <location evidence="10">Nucleolus</location>
    </subcellularLocation>
</comment>
<comment type="alternative products">
    <event type="alternative splicing"/>
    <isoform>
        <id>P78346-1</id>
        <name>1</name>
        <sequence type="displayed"/>
    </isoform>
    <isoform>
        <id>P78346-2</id>
        <name>2</name>
        <sequence type="described" ref="VSP_045673"/>
    </isoform>
</comment>
<comment type="miscellaneous">
    <text>Autoantibodies against RPP30 are found in sera from scleroderma patients.</text>
</comment>
<comment type="similarity">
    <text evidence="10">Belongs to the eukaryotic/archaeal RNase P protein component 3 family.</text>
</comment>
<name>RPP30_HUMAN</name>
<dbReference type="EMBL" id="U77665">
    <property type="protein sequence ID" value="AAC51143.1"/>
    <property type="molecule type" value="mRNA"/>
</dbReference>
<dbReference type="EMBL" id="AK312900">
    <property type="protein sequence ID" value="BAG35746.1"/>
    <property type="molecule type" value="mRNA"/>
</dbReference>
<dbReference type="EMBL" id="AK225532">
    <property type="status" value="NOT_ANNOTATED_CDS"/>
    <property type="molecule type" value="mRNA"/>
</dbReference>
<dbReference type="EMBL" id="AL590622">
    <property type="status" value="NOT_ANNOTATED_CDS"/>
    <property type="molecule type" value="Genomic_DNA"/>
</dbReference>
<dbReference type="EMBL" id="CH471066">
    <property type="protein sequence ID" value="EAW50117.1"/>
    <property type="molecule type" value="Genomic_DNA"/>
</dbReference>
<dbReference type="EMBL" id="BC006991">
    <property type="protein sequence ID" value="AAH06991.1"/>
    <property type="molecule type" value="mRNA"/>
</dbReference>
<dbReference type="CCDS" id="CCDS44458.1">
    <molecule id="P78346-2"/>
</dbReference>
<dbReference type="CCDS" id="CCDS7411.1">
    <molecule id="P78346-1"/>
</dbReference>
<dbReference type="RefSeq" id="NP_001098016.1">
    <molecule id="P78346-2"/>
    <property type="nucleotide sequence ID" value="NM_001104546.2"/>
</dbReference>
<dbReference type="RefSeq" id="NP_006404.1">
    <molecule id="P78346-1"/>
    <property type="nucleotide sequence ID" value="NM_006413.5"/>
</dbReference>
<dbReference type="RefSeq" id="XP_011537422.1">
    <property type="nucleotide sequence ID" value="XM_011539120.2"/>
</dbReference>
<dbReference type="RefSeq" id="XP_011537423.1">
    <property type="nucleotide sequence ID" value="XM_011539121.2"/>
</dbReference>
<dbReference type="RefSeq" id="XP_016870964.1">
    <property type="nucleotide sequence ID" value="XM_017015475.1"/>
</dbReference>
<dbReference type="RefSeq" id="XP_016870966.1">
    <property type="nucleotide sequence ID" value="XM_017015477.1"/>
</dbReference>
<dbReference type="PDB" id="6AHR">
    <property type="method" value="EM"/>
    <property type="resolution" value="3.92 A"/>
    <property type="chains" value="I/J=1-268"/>
</dbReference>
<dbReference type="PDB" id="6AHU">
    <property type="method" value="EM"/>
    <property type="resolution" value="3.66 A"/>
    <property type="chains" value="I/J=1-268"/>
</dbReference>
<dbReference type="PDBsum" id="6AHR"/>
<dbReference type="PDBsum" id="6AHU"/>
<dbReference type="EMDB" id="EMD-9626"/>
<dbReference type="EMDB" id="EMD-9627"/>
<dbReference type="SMR" id="P78346"/>
<dbReference type="BioGRID" id="115807">
    <property type="interactions" value="127"/>
</dbReference>
<dbReference type="ComplexPortal" id="CPX-2876">
    <property type="entry name" value="Ribonuclease MRP complex"/>
</dbReference>
<dbReference type="ComplexPortal" id="CPX-2877">
    <property type="entry name" value="Nucleolar ribonuclease P complex"/>
</dbReference>
<dbReference type="CORUM" id="P78346"/>
<dbReference type="FunCoup" id="P78346">
    <property type="interactions" value="1875"/>
</dbReference>
<dbReference type="IntAct" id="P78346">
    <property type="interactions" value="54"/>
</dbReference>
<dbReference type="MINT" id="P78346"/>
<dbReference type="STRING" id="9606.ENSP00000389182"/>
<dbReference type="GlyGen" id="P78346">
    <property type="glycosylation" value="1 site, 1 O-linked glycan (1 site)"/>
</dbReference>
<dbReference type="iPTMnet" id="P78346"/>
<dbReference type="PhosphoSitePlus" id="P78346"/>
<dbReference type="SwissPalm" id="P78346"/>
<dbReference type="BioMuta" id="RPP30"/>
<dbReference type="jPOST" id="P78346"/>
<dbReference type="MassIVE" id="P78346"/>
<dbReference type="PaxDb" id="9606-ENSP00000389182"/>
<dbReference type="PeptideAtlas" id="P78346"/>
<dbReference type="ProteomicsDB" id="19113"/>
<dbReference type="ProteomicsDB" id="57577">
    <molecule id="P78346-1"/>
</dbReference>
<dbReference type="Pumba" id="P78346"/>
<dbReference type="TopDownProteomics" id="P78346-1">
    <molecule id="P78346-1"/>
</dbReference>
<dbReference type="Antibodypedia" id="16338">
    <property type="antibodies" value="88 antibodies from 22 providers"/>
</dbReference>
<dbReference type="DNASU" id="10556"/>
<dbReference type="Ensembl" id="ENST00000371703.8">
    <molecule id="P78346-1"/>
    <property type="protein sequence ID" value="ENSP00000360768.3"/>
    <property type="gene ID" value="ENSG00000148688.14"/>
</dbReference>
<dbReference type="Ensembl" id="ENST00000413330.5">
    <molecule id="P78346-2"/>
    <property type="protein sequence ID" value="ENSP00000389182.1"/>
    <property type="gene ID" value="ENSG00000148688.14"/>
</dbReference>
<dbReference type="GeneID" id="10556"/>
<dbReference type="KEGG" id="hsa:10556"/>
<dbReference type="MANE-Select" id="ENST00000371703.8">
    <property type="protein sequence ID" value="ENSP00000360768.3"/>
    <property type="RefSeq nucleotide sequence ID" value="NM_006413.5"/>
    <property type="RefSeq protein sequence ID" value="NP_006404.1"/>
</dbReference>
<dbReference type="UCSC" id="uc009xtx.4">
    <molecule id="P78346-1"/>
    <property type="organism name" value="human"/>
</dbReference>
<dbReference type="AGR" id="HGNC:17688"/>
<dbReference type="CTD" id="10556"/>
<dbReference type="DisGeNET" id="10556"/>
<dbReference type="GeneCards" id="RPP30"/>
<dbReference type="HGNC" id="HGNC:17688">
    <property type="gene designation" value="RPP30"/>
</dbReference>
<dbReference type="HPA" id="ENSG00000148688">
    <property type="expression patterns" value="Low tissue specificity"/>
</dbReference>
<dbReference type="MIM" id="606115">
    <property type="type" value="gene"/>
</dbReference>
<dbReference type="neXtProt" id="NX_P78346"/>
<dbReference type="OpenTargets" id="ENSG00000148688"/>
<dbReference type="PharmGKB" id="PA134876345"/>
<dbReference type="VEuPathDB" id="HostDB:ENSG00000148688"/>
<dbReference type="eggNOG" id="KOG2363">
    <property type="taxonomic scope" value="Eukaryota"/>
</dbReference>
<dbReference type="GeneTree" id="ENSGT00390000000883"/>
<dbReference type="InParanoid" id="P78346"/>
<dbReference type="OMA" id="CYGPGIT"/>
<dbReference type="OrthoDB" id="17948at2759"/>
<dbReference type="PAN-GO" id="P78346">
    <property type="GO annotations" value="4 GO annotations based on evolutionary models"/>
</dbReference>
<dbReference type="PhylomeDB" id="P78346"/>
<dbReference type="TreeFam" id="TF106113"/>
<dbReference type="BRENDA" id="3.1.26.5">
    <property type="organism ID" value="2681"/>
</dbReference>
<dbReference type="PathwayCommons" id="P78346"/>
<dbReference type="Reactome" id="R-HSA-6784531">
    <property type="pathway name" value="tRNA processing in the nucleus"/>
</dbReference>
<dbReference type="Reactome" id="R-HSA-6791226">
    <property type="pathway name" value="Major pathway of rRNA processing in the nucleolus and cytosol"/>
</dbReference>
<dbReference type="SignaLink" id="P78346"/>
<dbReference type="BioGRID-ORCS" id="10556">
    <property type="hits" value="659 hits in 1159 CRISPR screens"/>
</dbReference>
<dbReference type="CD-CODE" id="91857CE7">
    <property type="entry name" value="Nucleolus"/>
</dbReference>
<dbReference type="ChiTaRS" id="RPP30">
    <property type="organism name" value="human"/>
</dbReference>
<dbReference type="GeneWiki" id="RPP30"/>
<dbReference type="GenomeRNAi" id="10556"/>
<dbReference type="Pharos" id="P78346">
    <property type="development level" value="Tbio"/>
</dbReference>
<dbReference type="PRO" id="PR:P78346"/>
<dbReference type="Proteomes" id="UP000005640">
    <property type="component" value="Chromosome 10"/>
</dbReference>
<dbReference type="RNAct" id="P78346">
    <property type="molecule type" value="protein"/>
</dbReference>
<dbReference type="Bgee" id="ENSG00000148688">
    <property type="expression patterns" value="Expressed in primordial germ cell in gonad and 211 other cell types or tissues"/>
</dbReference>
<dbReference type="ExpressionAtlas" id="P78346">
    <property type="expression patterns" value="baseline and differential"/>
</dbReference>
<dbReference type="GO" id="GO:0030681">
    <property type="term" value="C:multimeric ribonuclease P complex"/>
    <property type="evidence" value="ECO:0000314"/>
    <property type="project" value="UniProtKB"/>
</dbReference>
<dbReference type="GO" id="GO:0005655">
    <property type="term" value="C:nucleolar ribonuclease P complex"/>
    <property type="evidence" value="ECO:0000318"/>
    <property type="project" value="GO_Central"/>
</dbReference>
<dbReference type="GO" id="GO:0005654">
    <property type="term" value="C:nucleoplasm"/>
    <property type="evidence" value="ECO:0000304"/>
    <property type="project" value="Reactome"/>
</dbReference>
<dbReference type="GO" id="GO:0005634">
    <property type="term" value="C:nucleus"/>
    <property type="evidence" value="ECO:0000304"/>
    <property type="project" value="ProtInc"/>
</dbReference>
<dbReference type="GO" id="GO:0000172">
    <property type="term" value="C:ribonuclease MRP complex"/>
    <property type="evidence" value="ECO:0000314"/>
    <property type="project" value="FlyBase"/>
</dbReference>
<dbReference type="GO" id="GO:0004526">
    <property type="term" value="F:ribonuclease P activity"/>
    <property type="evidence" value="ECO:0000304"/>
    <property type="project" value="ProtInc"/>
</dbReference>
<dbReference type="GO" id="GO:0033204">
    <property type="term" value="F:ribonuclease P RNA binding"/>
    <property type="evidence" value="ECO:0000314"/>
    <property type="project" value="UniProtKB"/>
</dbReference>
<dbReference type="GO" id="GO:0003723">
    <property type="term" value="F:RNA binding"/>
    <property type="evidence" value="ECO:0007005"/>
    <property type="project" value="UniProtKB"/>
</dbReference>
<dbReference type="GO" id="GO:0006364">
    <property type="term" value="P:rRNA processing"/>
    <property type="evidence" value="ECO:0007669"/>
    <property type="project" value="UniProtKB-KW"/>
</dbReference>
<dbReference type="GO" id="GO:0001682">
    <property type="term" value="P:tRNA 5'-leader removal"/>
    <property type="evidence" value="ECO:0000314"/>
    <property type="project" value="UniProtKB"/>
</dbReference>
<dbReference type="GO" id="GO:0008033">
    <property type="term" value="P:tRNA processing"/>
    <property type="evidence" value="ECO:0000318"/>
    <property type="project" value="GO_Central"/>
</dbReference>
<dbReference type="FunFam" id="3.20.20.140:FF:000031">
    <property type="entry name" value="ribonuclease P protein subunit p30"/>
    <property type="match status" value="1"/>
</dbReference>
<dbReference type="Gene3D" id="3.20.20.140">
    <property type="entry name" value="Metal-dependent hydrolases"/>
    <property type="match status" value="1"/>
</dbReference>
<dbReference type="InterPro" id="IPR016195">
    <property type="entry name" value="Pol/histidinol_Pase-like"/>
</dbReference>
<dbReference type="InterPro" id="IPR002738">
    <property type="entry name" value="RNase_P_p30"/>
</dbReference>
<dbReference type="PANTHER" id="PTHR13031:SF0">
    <property type="entry name" value="RIBONUCLEASE P PROTEIN SUBUNIT P30"/>
    <property type="match status" value="1"/>
</dbReference>
<dbReference type="PANTHER" id="PTHR13031">
    <property type="entry name" value="RIBONUCLEASE P SUBUNIT P30"/>
    <property type="match status" value="1"/>
</dbReference>
<dbReference type="Pfam" id="PF01876">
    <property type="entry name" value="RNase_P_p30"/>
    <property type="match status" value="1"/>
</dbReference>
<dbReference type="SUPFAM" id="SSF89550">
    <property type="entry name" value="PHP domain-like"/>
    <property type="match status" value="1"/>
</dbReference>
<evidence type="ECO:0000256" key="1">
    <source>
        <dbReference type="SAM" id="MobiDB-lite"/>
    </source>
</evidence>
<evidence type="ECO:0000269" key="2">
    <source>
    </source>
</evidence>
<evidence type="ECO:0000269" key="3">
    <source>
    </source>
</evidence>
<evidence type="ECO:0000269" key="4">
    <source>
    </source>
</evidence>
<evidence type="ECO:0000269" key="5">
    <source>
    </source>
</evidence>
<evidence type="ECO:0000269" key="6">
    <source>
    </source>
</evidence>
<evidence type="ECO:0000269" key="7">
    <source>
    </source>
</evidence>
<evidence type="ECO:0000269" key="8">
    <source ref="7"/>
</evidence>
<evidence type="ECO:0000303" key="9">
    <source ref="3"/>
</evidence>
<evidence type="ECO:0000305" key="10"/>
<evidence type="ECO:0007744" key="11">
    <source>
        <dbReference type="PDB" id="6AHR"/>
    </source>
</evidence>
<evidence type="ECO:0007744" key="12">
    <source>
        <dbReference type="PDB" id="6AHU"/>
    </source>
</evidence>
<evidence type="ECO:0007744" key="13">
    <source>
    </source>
</evidence>
<evidence type="ECO:0007744" key="14">
    <source>
    </source>
</evidence>
<evidence type="ECO:0007744" key="15">
    <source>
    </source>
</evidence>
<evidence type="ECO:0007744" key="16">
    <source>
    </source>
</evidence>
<evidence type="ECO:0007744" key="17">
    <source>
    </source>
</evidence>
<evidence type="ECO:0007744" key="18">
    <source>
    </source>
</evidence>
<gene>
    <name type="primary">RPP30</name>
    <name type="synonym">RNASEP2</name>
</gene>
<sequence length="268" mass="29321">MAVFADLDLRAGSDLKALRGLVETAAHLGYSVVAINHIVDFKEKKQEIEKPVAVSELFTTLPIVQGKSRPIKILTRLTIIVSDPSHCNVLRATSSRARLYDVVAVFPKTEKLFHIACTHLDVDLVCITVTEKLPFYFKRPPINVAIDRGLAFELVYSPAIKDSTMRRYTISSALNLMQICKGKNVIISSAAERPLEIRGPYDVANLGLLFGLSESDAKAAVSTNCRAALLHGETRKTAFGIISTVKKPRPSEGDEDCLPASKKAKCEG</sequence>
<proteinExistence type="evidence at protein level"/>
<accession>P78346</accession>
<accession>B2R799</accession>
<accession>E9PB02</accession>
<keyword id="KW-0002">3D-structure</keyword>
<keyword id="KW-0007">Acetylation</keyword>
<keyword id="KW-0025">Alternative splicing</keyword>
<keyword id="KW-0903">Direct protein sequencing</keyword>
<keyword id="KW-0539">Nucleus</keyword>
<keyword id="KW-0597">Phosphoprotein</keyword>
<keyword id="KW-1267">Proteomics identification</keyword>
<keyword id="KW-1185">Reference proteome</keyword>
<keyword id="KW-0694">RNA-binding</keyword>
<keyword id="KW-0698">rRNA processing</keyword>
<keyword id="KW-0819">tRNA processing</keyword>
<reference key="1">
    <citation type="journal article" date="1997" name="Proc. Natl. Acad. Sci. U.S.A.">
        <title>Characterization of two scleroderma autoimmune antigens that copurify with human ribonuclease P.</title>
        <authorList>
            <person name="Eder P.S."/>
            <person name="Kekuda R."/>
            <person name="Stolc V."/>
            <person name="Altman S."/>
        </authorList>
    </citation>
    <scope>NUCLEOTIDE SEQUENCE [MRNA] (ISOFORM 1)</scope>
    <scope>PROTEIN SEQUENCE OF 21-30; 140-148 AND 185-198</scope>
    <scope>FUNCTION</scope>
    <scope>SUBUNIT</scope>
</reference>
<reference key="2">
    <citation type="journal article" date="2004" name="Nat. Genet.">
        <title>Complete sequencing and characterization of 21,243 full-length human cDNAs.</title>
        <authorList>
            <person name="Ota T."/>
            <person name="Suzuki Y."/>
            <person name="Nishikawa T."/>
            <person name="Otsuki T."/>
            <person name="Sugiyama T."/>
            <person name="Irie R."/>
            <person name="Wakamatsu A."/>
            <person name="Hayashi K."/>
            <person name="Sato H."/>
            <person name="Nagai K."/>
            <person name="Kimura K."/>
            <person name="Makita H."/>
            <person name="Sekine M."/>
            <person name="Obayashi M."/>
            <person name="Nishi T."/>
            <person name="Shibahara T."/>
            <person name="Tanaka T."/>
            <person name="Ishii S."/>
            <person name="Yamamoto J."/>
            <person name="Saito K."/>
            <person name="Kawai Y."/>
            <person name="Isono Y."/>
            <person name="Nakamura Y."/>
            <person name="Nagahari K."/>
            <person name="Murakami K."/>
            <person name="Yasuda T."/>
            <person name="Iwayanagi T."/>
            <person name="Wagatsuma M."/>
            <person name="Shiratori A."/>
            <person name="Sudo H."/>
            <person name="Hosoiri T."/>
            <person name="Kaku Y."/>
            <person name="Kodaira H."/>
            <person name="Kondo H."/>
            <person name="Sugawara M."/>
            <person name="Takahashi M."/>
            <person name="Kanda K."/>
            <person name="Yokoi T."/>
            <person name="Furuya T."/>
            <person name="Kikkawa E."/>
            <person name="Omura Y."/>
            <person name="Abe K."/>
            <person name="Kamihara K."/>
            <person name="Katsuta N."/>
            <person name="Sato K."/>
            <person name="Tanikawa M."/>
            <person name="Yamazaki M."/>
            <person name="Ninomiya K."/>
            <person name="Ishibashi T."/>
            <person name="Yamashita H."/>
            <person name="Murakawa K."/>
            <person name="Fujimori K."/>
            <person name="Tanai H."/>
            <person name="Kimata M."/>
            <person name="Watanabe M."/>
            <person name="Hiraoka S."/>
            <person name="Chiba Y."/>
            <person name="Ishida S."/>
            <person name="Ono Y."/>
            <person name="Takiguchi S."/>
            <person name="Watanabe S."/>
            <person name="Yosida M."/>
            <person name="Hotuta T."/>
            <person name="Kusano J."/>
            <person name="Kanehori K."/>
            <person name="Takahashi-Fujii A."/>
            <person name="Hara H."/>
            <person name="Tanase T.-O."/>
            <person name="Nomura Y."/>
            <person name="Togiya S."/>
            <person name="Komai F."/>
            <person name="Hara R."/>
            <person name="Takeuchi K."/>
            <person name="Arita M."/>
            <person name="Imose N."/>
            <person name="Musashino K."/>
            <person name="Yuuki H."/>
            <person name="Oshima A."/>
            <person name="Sasaki N."/>
            <person name="Aotsuka S."/>
            <person name="Yoshikawa Y."/>
            <person name="Matsunawa H."/>
            <person name="Ichihara T."/>
            <person name="Shiohata N."/>
            <person name="Sano S."/>
            <person name="Moriya S."/>
            <person name="Momiyama H."/>
            <person name="Satoh N."/>
            <person name="Takami S."/>
            <person name="Terashima Y."/>
            <person name="Suzuki O."/>
            <person name="Nakagawa S."/>
            <person name="Senoh A."/>
            <person name="Mizoguchi H."/>
            <person name="Goto Y."/>
            <person name="Shimizu F."/>
            <person name="Wakebe H."/>
            <person name="Hishigaki H."/>
            <person name="Watanabe T."/>
            <person name="Sugiyama A."/>
            <person name="Takemoto M."/>
            <person name="Kawakami B."/>
            <person name="Yamazaki M."/>
            <person name="Watanabe K."/>
            <person name="Kumagai A."/>
            <person name="Itakura S."/>
            <person name="Fukuzumi Y."/>
            <person name="Fujimori Y."/>
            <person name="Komiyama M."/>
            <person name="Tashiro H."/>
            <person name="Tanigami A."/>
            <person name="Fujiwara T."/>
            <person name="Ono T."/>
            <person name="Yamada K."/>
            <person name="Fujii Y."/>
            <person name="Ozaki K."/>
            <person name="Hirao M."/>
            <person name="Ohmori Y."/>
            <person name="Kawabata A."/>
            <person name="Hikiji T."/>
            <person name="Kobatake N."/>
            <person name="Inagaki H."/>
            <person name="Ikema Y."/>
            <person name="Okamoto S."/>
            <person name="Okitani R."/>
            <person name="Kawakami T."/>
            <person name="Noguchi S."/>
            <person name="Itoh T."/>
            <person name="Shigeta K."/>
            <person name="Senba T."/>
            <person name="Matsumura K."/>
            <person name="Nakajima Y."/>
            <person name="Mizuno T."/>
            <person name="Morinaga M."/>
            <person name="Sasaki M."/>
            <person name="Togashi T."/>
            <person name="Oyama M."/>
            <person name="Hata H."/>
            <person name="Watanabe M."/>
            <person name="Komatsu T."/>
            <person name="Mizushima-Sugano J."/>
            <person name="Satoh T."/>
            <person name="Shirai Y."/>
            <person name="Takahashi Y."/>
            <person name="Nakagawa K."/>
            <person name="Okumura K."/>
            <person name="Nagase T."/>
            <person name="Nomura N."/>
            <person name="Kikuchi H."/>
            <person name="Masuho Y."/>
            <person name="Yamashita R."/>
            <person name="Nakai K."/>
            <person name="Yada T."/>
            <person name="Nakamura Y."/>
            <person name="Ohara O."/>
            <person name="Isogai T."/>
            <person name="Sugano S."/>
        </authorList>
    </citation>
    <scope>NUCLEOTIDE SEQUENCE [LARGE SCALE MRNA] (ISOFORM 1)</scope>
    <source>
        <tissue>Brain</tissue>
    </source>
</reference>
<reference key="3">
    <citation type="submission" date="2006-07" db="EMBL/GenBank/DDBJ databases">
        <authorList>
            <person name="Suzuki Y."/>
            <person name="Sugano S."/>
            <person name="Totoki Y."/>
            <person name="Toyoda A."/>
            <person name="Takeda T."/>
            <person name="Sakaki Y."/>
            <person name="Tanaka A."/>
            <person name="Yokoyama S."/>
        </authorList>
    </citation>
    <scope>NUCLEOTIDE SEQUENCE [LARGE SCALE MRNA] (ISOFORM 2)</scope>
    <source>
        <tissue>Signet-ring cell carcinoma</tissue>
    </source>
</reference>
<reference key="4">
    <citation type="journal article" date="2004" name="Nature">
        <title>The DNA sequence and comparative analysis of human chromosome 10.</title>
        <authorList>
            <person name="Deloukas P."/>
            <person name="Earthrowl M.E."/>
            <person name="Grafham D.V."/>
            <person name="Rubenfield M."/>
            <person name="French L."/>
            <person name="Steward C.A."/>
            <person name="Sims S.K."/>
            <person name="Jones M.C."/>
            <person name="Searle S."/>
            <person name="Scott C."/>
            <person name="Howe K."/>
            <person name="Hunt S.E."/>
            <person name="Andrews T.D."/>
            <person name="Gilbert J.G.R."/>
            <person name="Swarbreck D."/>
            <person name="Ashurst J.L."/>
            <person name="Taylor A."/>
            <person name="Battles J."/>
            <person name="Bird C.P."/>
            <person name="Ainscough R."/>
            <person name="Almeida J.P."/>
            <person name="Ashwell R.I.S."/>
            <person name="Ambrose K.D."/>
            <person name="Babbage A.K."/>
            <person name="Bagguley C.L."/>
            <person name="Bailey J."/>
            <person name="Banerjee R."/>
            <person name="Bates K."/>
            <person name="Beasley H."/>
            <person name="Bray-Allen S."/>
            <person name="Brown A.J."/>
            <person name="Brown J.Y."/>
            <person name="Burford D.C."/>
            <person name="Burrill W."/>
            <person name="Burton J."/>
            <person name="Cahill P."/>
            <person name="Camire D."/>
            <person name="Carter N.P."/>
            <person name="Chapman J.C."/>
            <person name="Clark S.Y."/>
            <person name="Clarke G."/>
            <person name="Clee C.M."/>
            <person name="Clegg S."/>
            <person name="Corby N."/>
            <person name="Coulson A."/>
            <person name="Dhami P."/>
            <person name="Dutta I."/>
            <person name="Dunn M."/>
            <person name="Faulkner L."/>
            <person name="Frankish A."/>
            <person name="Frankland J.A."/>
            <person name="Garner P."/>
            <person name="Garnett J."/>
            <person name="Gribble S."/>
            <person name="Griffiths C."/>
            <person name="Grocock R."/>
            <person name="Gustafson E."/>
            <person name="Hammond S."/>
            <person name="Harley J.L."/>
            <person name="Hart E."/>
            <person name="Heath P.D."/>
            <person name="Ho T.P."/>
            <person name="Hopkins B."/>
            <person name="Horne J."/>
            <person name="Howden P.J."/>
            <person name="Huckle E."/>
            <person name="Hynds C."/>
            <person name="Johnson C."/>
            <person name="Johnson D."/>
            <person name="Kana A."/>
            <person name="Kay M."/>
            <person name="Kimberley A.M."/>
            <person name="Kershaw J.K."/>
            <person name="Kokkinaki M."/>
            <person name="Laird G.K."/>
            <person name="Lawlor S."/>
            <person name="Lee H.M."/>
            <person name="Leongamornlert D.A."/>
            <person name="Laird G."/>
            <person name="Lloyd C."/>
            <person name="Lloyd D.M."/>
            <person name="Loveland J."/>
            <person name="Lovell J."/>
            <person name="McLaren S."/>
            <person name="McLay K.E."/>
            <person name="McMurray A."/>
            <person name="Mashreghi-Mohammadi M."/>
            <person name="Matthews L."/>
            <person name="Milne S."/>
            <person name="Nickerson T."/>
            <person name="Nguyen M."/>
            <person name="Overton-Larty E."/>
            <person name="Palmer S.A."/>
            <person name="Pearce A.V."/>
            <person name="Peck A.I."/>
            <person name="Pelan S."/>
            <person name="Phillimore B."/>
            <person name="Porter K."/>
            <person name="Rice C.M."/>
            <person name="Rogosin A."/>
            <person name="Ross M.T."/>
            <person name="Sarafidou T."/>
            <person name="Sehra H.K."/>
            <person name="Shownkeen R."/>
            <person name="Skuce C.D."/>
            <person name="Smith M."/>
            <person name="Standring L."/>
            <person name="Sycamore N."/>
            <person name="Tester J."/>
            <person name="Thorpe A."/>
            <person name="Torcasso W."/>
            <person name="Tracey A."/>
            <person name="Tromans A."/>
            <person name="Tsolas J."/>
            <person name="Wall M."/>
            <person name="Walsh J."/>
            <person name="Wang H."/>
            <person name="Weinstock K."/>
            <person name="West A.P."/>
            <person name="Willey D.L."/>
            <person name="Whitehead S.L."/>
            <person name="Wilming L."/>
            <person name="Wray P.W."/>
            <person name="Young L."/>
            <person name="Chen Y."/>
            <person name="Lovering R.C."/>
            <person name="Moschonas N.K."/>
            <person name="Siebert R."/>
            <person name="Fechtel K."/>
            <person name="Bentley D."/>
            <person name="Durbin R.M."/>
            <person name="Hubbard T."/>
            <person name="Doucette-Stamm L."/>
            <person name="Beck S."/>
            <person name="Smith D.R."/>
            <person name="Rogers J."/>
        </authorList>
    </citation>
    <scope>NUCLEOTIDE SEQUENCE [LARGE SCALE GENOMIC DNA]</scope>
</reference>
<reference key="5">
    <citation type="submission" date="2005-09" db="EMBL/GenBank/DDBJ databases">
        <authorList>
            <person name="Mural R.J."/>
            <person name="Istrail S."/>
            <person name="Sutton G.G."/>
            <person name="Florea L."/>
            <person name="Halpern A.L."/>
            <person name="Mobarry C.M."/>
            <person name="Lippert R."/>
            <person name="Walenz B."/>
            <person name="Shatkay H."/>
            <person name="Dew I."/>
            <person name="Miller J.R."/>
            <person name="Flanigan M.J."/>
            <person name="Edwards N.J."/>
            <person name="Bolanos R."/>
            <person name="Fasulo D."/>
            <person name="Halldorsson B.V."/>
            <person name="Hannenhalli S."/>
            <person name="Turner R."/>
            <person name="Yooseph S."/>
            <person name="Lu F."/>
            <person name="Nusskern D.R."/>
            <person name="Shue B.C."/>
            <person name="Zheng X.H."/>
            <person name="Zhong F."/>
            <person name="Delcher A.L."/>
            <person name="Huson D.H."/>
            <person name="Kravitz S.A."/>
            <person name="Mouchard L."/>
            <person name="Reinert K."/>
            <person name="Remington K.A."/>
            <person name="Clark A.G."/>
            <person name="Waterman M.S."/>
            <person name="Eichler E.E."/>
            <person name="Adams M.D."/>
            <person name="Hunkapiller M.W."/>
            <person name="Myers E.W."/>
            <person name="Venter J.C."/>
        </authorList>
    </citation>
    <scope>NUCLEOTIDE SEQUENCE [LARGE SCALE GENOMIC DNA]</scope>
</reference>
<reference key="6">
    <citation type="journal article" date="2004" name="Genome Res.">
        <title>The status, quality, and expansion of the NIH full-length cDNA project: the Mammalian Gene Collection (MGC).</title>
        <authorList>
            <consortium name="The MGC Project Team"/>
        </authorList>
    </citation>
    <scope>NUCLEOTIDE SEQUENCE [LARGE SCALE MRNA] (ISOFORM 1)</scope>
    <source>
        <tissue>Kidney</tissue>
    </source>
</reference>
<reference key="7">
    <citation type="submission" date="2009-06" db="UniProtKB">
        <authorList>
            <person name="Bienvenut W.V."/>
            <person name="Lao L."/>
            <person name="Ryan K.M."/>
        </authorList>
    </citation>
    <scope>PROTEIN SEQUENCE OF 2-10; 99-108; 139-161; 184-198 AND 237-246</scope>
    <scope>CLEAVAGE OF INITIATOR METHIONINE</scope>
    <scope>ACETYLATION AT ALA-2</scope>
    <scope>IDENTIFICATION BY MASS SPECTROMETRY</scope>
    <source>
        <tissue>Osteosarcoma</tissue>
    </source>
</reference>
<reference key="8">
    <citation type="journal article" date="1998" name="RNA">
        <title>Autoantigenic properties of some protein subunits of catalytically active complexes of human ribonuclease P.</title>
        <authorList>
            <person name="Jarrous N."/>
            <person name="Eder P.S."/>
            <person name="Guerrier-Takada C."/>
            <person name="Hoog C."/>
            <person name="Altman S."/>
        </authorList>
    </citation>
    <scope>FUNCTION</scope>
    <scope>SUBUNIT</scope>
</reference>
<reference key="9">
    <citation type="journal article" date="2006" name="Cell">
        <title>Global, in vivo, and site-specific phosphorylation dynamics in signaling networks.</title>
        <authorList>
            <person name="Olsen J.V."/>
            <person name="Blagoev B."/>
            <person name="Gnad F."/>
            <person name="Macek B."/>
            <person name="Kumar C."/>
            <person name="Mortensen P."/>
            <person name="Mann M."/>
        </authorList>
    </citation>
    <scope>PHOSPHORYLATION [LARGE SCALE ANALYSIS] AT SER-251</scope>
    <scope>IDENTIFICATION BY MASS SPECTROMETRY [LARGE SCALE ANALYSIS]</scope>
    <source>
        <tissue>Cervix carcinoma</tissue>
    </source>
</reference>
<reference key="10">
    <citation type="journal article" date="2006" name="RNA">
        <title>Differential association of protein subunits with the human RNase MRP and RNase P complexes.</title>
        <authorList>
            <person name="Welting T.J."/>
            <person name="Kikkert B.J."/>
            <person name="van Venrooij W.J."/>
            <person name="Pruijn G.J."/>
        </authorList>
    </citation>
    <scope>IDENTIFICATION IN RNASE P AND MRP COMPLEXES</scope>
    <scope>SUBUNIT</scope>
</reference>
<reference key="11">
    <citation type="journal article" date="2008" name="J. Proteome Res.">
        <title>Combining protein-based IMAC, peptide-based IMAC, and MudPIT for efficient phosphoproteomic analysis.</title>
        <authorList>
            <person name="Cantin G.T."/>
            <person name="Yi W."/>
            <person name="Lu B."/>
            <person name="Park S.K."/>
            <person name="Xu T."/>
            <person name="Lee J.-D."/>
            <person name="Yates J.R. III"/>
        </authorList>
    </citation>
    <scope>PHOSPHORYLATION [LARGE SCALE ANALYSIS] AT SER-251</scope>
    <scope>IDENTIFICATION BY MASS SPECTROMETRY [LARGE SCALE ANALYSIS]</scope>
    <source>
        <tissue>Cervix carcinoma</tissue>
    </source>
</reference>
<reference key="12">
    <citation type="journal article" date="2009" name="Sci. Signal.">
        <title>Quantitative phosphoproteomic analysis of T cell receptor signaling reveals system-wide modulation of protein-protein interactions.</title>
        <authorList>
            <person name="Mayya V."/>
            <person name="Lundgren D.H."/>
            <person name="Hwang S.-I."/>
            <person name="Rezaul K."/>
            <person name="Wu L."/>
            <person name="Eng J.K."/>
            <person name="Rodionov V."/>
            <person name="Han D.K."/>
        </authorList>
    </citation>
    <scope>PHOSPHORYLATION [LARGE SCALE ANALYSIS] AT SER-251</scope>
    <scope>IDENTIFICATION BY MASS SPECTROMETRY [LARGE SCALE ANALYSIS]</scope>
    <source>
        <tissue>Leukemic T-cell</tissue>
    </source>
</reference>
<reference key="13">
    <citation type="journal article" date="2011" name="BMC Syst. Biol.">
        <title>Initial characterization of the human central proteome.</title>
        <authorList>
            <person name="Burkard T.R."/>
            <person name="Planyavsky M."/>
            <person name="Kaupe I."/>
            <person name="Breitwieser F.P."/>
            <person name="Buerckstuemmer T."/>
            <person name="Bennett K.L."/>
            <person name="Superti-Furga G."/>
            <person name="Colinge J."/>
        </authorList>
    </citation>
    <scope>IDENTIFICATION BY MASS SPECTROMETRY [LARGE SCALE ANALYSIS]</scope>
</reference>
<reference key="14">
    <citation type="journal article" date="2012" name="Mol. Cell. Proteomics">
        <title>Comparative large-scale characterisation of plant vs. mammal proteins reveals similar and idiosyncratic N-alpha acetylation features.</title>
        <authorList>
            <person name="Bienvenut W.V."/>
            <person name="Sumpton D."/>
            <person name="Martinez A."/>
            <person name="Lilla S."/>
            <person name="Espagne C."/>
            <person name="Meinnel T."/>
            <person name="Giglione C."/>
        </authorList>
    </citation>
    <scope>ACETYLATION [LARGE SCALE ANALYSIS] AT ALA-2</scope>
    <scope>CLEAVAGE OF INITIATOR METHIONINE [LARGE SCALE ANALYSIS]</scope>
    <scope>IDENTIFICATION BY MASS SPECTROMETRY [LARGE SCALE ANALYSIS]</scope>
</reference>
<reference key="15">
    <citation type="journal article" date="2012" name="Proc. Natl. Acad. Sci. U.S.A.">
        <title>N-terminal acetylome analyses and functional insights of the N-terminal acetyltransferase NatB.</title>
        <authorList>
            <person name="Van Damme P."/>
            <person name="Lasa M."/>
            <person name="Polevoda B."/>
            <person name="Gazquez C."/>
            <person name="Elosegui-Artola A."/>
            <person name="Kim D.S."/>
            <person name="De Juan-Pardo E."/>
            <person name="Demeyer K."/>
            <person name="Hole K."/>
            <person name="Larrea E."/>
            <person name="Timmerman E."/>
            <person name="Prieto J."/>
            <person name="Arnesen T."/>
            <person name="Sherman F."/>
            <person name="Gevaert K."/>
            <person name="Aldabe R."/>
        </authorList>
    </citation>
    <scope>IDENTIFICATION BY MASS SPECTROMETRY [LARGE SCALE ANALYSIS]</scope>
</reference>
<reference key="16">
    <citation type="journal article" date="2013" name="J. Proteome Res.">
        <title>Toward a comprehensive characterization of a human cancer cell phosphoproteome.</title>
        <authorList>
            <person name="Zhou H."/>
            <person name="Di Palma S."/>
            <person name="Preisinger C."/>
            <person name="Peng M."/>
            <person name="Polat A.N."/>
            <person name="Heck A.J."/>
            <person name="Mohammed S."/>
        </authorList>
    </citation>
    <scope>PHOSPHORYLATION [LARGE SCALE ANALYSIS] AT SER-251</scope>
    <scope>IDENTIFICATION BY MASS SPECTROMETRY [LARGE SCALE ANALYSIS]</scope>
    <source>
        <tissue>Cervix carcinoma</tissue>
        <tissue>Erythroleukemia</tissue>
    </source>
</reference>
<reference key="17">
    <citation type="journal article" date="2014" name="J. Proteomics">
        <title>An enzyme assisted RP-RPLC approach for in-depth analysis of human liver phosphoproteome.</title>
        <authorList>
            <person name="Bian Y."/>
            <person name="Song C."/>
            <person name="Cheng K."/>
            <person name="Dong M."/>
            <person name="Wang F."/>
            <person name="Huang J."/>
            <person name="Sun D."/>
            <person name="Wang L."/>
            <person name="Ye M."/>
            <person name="Zou H."/>
        </authorList>
    </citation>
    <scope>PHOSPHORYLATION [LARGE SCALE ANALYSIS] AT SER-251</scope>
    <scope>IDENTIFICATION BY MASS SPECTROMETRY [LARGE SCALE ANALYSIS]</scope>
    <source>
        <tissue>Liver</tissue>
    </source>
</reference>
<reference key="18">
    <citation type="journal article" date="2015" name="Hum. Mol. Genet.">
        <title>Biochemical and cellular analysis of Ogden syndrome reveals downstream Nt-acetylation defects.</title>
        <authorList>
            <person name="Myklebust L.M."/>
            <person name="Van Damme P."/>
            <person name="Stoeve S.I."/>
            <person name="Doerfel M.J."/>
            <person name="Abboud A."/>
            <person name="Kalvik T.V."/>
            <person name="Grauffel C."/>
            <person name="Jonckheere V."/>
            <person name="Wu Y."/>
            <person name="Swensen J."/>
            <person name="Kaasa H."/>
            <person name="Liszczak G."/>
            <person name="Marmorstein R."/>
            <person name="Reuter N."/>
            <person name="Lyon G.J."/>
            <person name="Gevaert K."/>
            <person name="Arnesen T."/>
        </authorList>
    </citation>
    <scope>ACETYLATION AT ALA-2</scope>
    <scope>CLEAVAGE OF INITIATOR METHIONINE</scope>
</reference>
<reference key="19">
    <citation type="journal article" date="2017" name="Genes Dev.">
        <title>Targeted CRISPR disruption reveals a role for RNase MRP RNA in human preribosomal RNA processing.</title>
        <authorList>
            <person name="Goldfarb K.C."/>
            <person name="Cech T.R."/>
        </authorList>
    </citation>
    <scope>FUNCTION</scope>
    <scope>SUBUNIT</scope>
</reference>
<reference evidence="11 12" key="20">
    <citation type="journal article" date="2018" name="Cell">
        <title>Cryo-EM Structure of the Human Ribonuclease P Holoenzyme.</title>
        <authorList>
            <person name="Wu J."/>
            <person name="Niu S."/>
            <person name="Tan M."/>
            <person name="Huang C."/>
            <person name="Li M."/>
            <person name="Song Y."/>
            <person name="Wang Q."/>
            <person name="Chen J."/>
            <person name="Shi S."/>
            <person name="Lan P."/>
            <person name="Lei M."/>
        </authorList>
    </citation>
    <scope>STRUCTURE BY ELECTRON MICROSCOPY (3.66 ANGSTROMS) OF RNASE P HOLOENZYME IN COMPLEX WITH TRNA</scope>
    <scope>FUNCTION</scope>
    <scope>SUBUNIT</scope>
</reference>
<feature type="initiator methionine" description="Removed" evidence="3 8 16">
    <location>
        <position position="1"/>
    </location>
</feature>
<feature type="chain" id="PRO_0000140031" description="Ribonuclease P protein subunit p30">
    <location>
        <begin position="2"/>
        <end position="268"/>
    </location>
</feature>
<feature type="region of interest" description="Disordered" evidence="1">
    <location>
        <begin position="247"/>
        <end position="268"/>
    </location>
</feature>
<feature type="modified residue" description="N-acetylalanine" evidence="3 8 16">
    <location>
        <position position="2"/>
    </location>
</feature>
<feature type="modified residue" description="Phosphoserine" evidence="13 14 15 17 18">
    <location>
        <position position="251"/>
    </location>
</feature>
<feature type="splice variant" id="VSP_045673" description="In isoform 2." evidence="9">
    <original>CEG</original>
    <variation>WSHSVTQAGVQWHNLGSLQPLPLGLKPSSHLSLPRTRIQQRQLLISHQRDHTPKNRL</variation>
    <location>
        <begin position="266"/>
        <end position="268"/>
    </location>
</feature>
<feature type="sequence variant" id="VAR_051870" description="In dbSNP:rs11544145.">
    <original>G</original>
    <variation>D</variation>
    <location>
        <position position="12"/>
    </location>
</feature>
<feature type="sequence conflict" description="In Ref. 3; AK225532." evidence="10" ref="3">
    <original>Q</original>
    <variation>R</variation>
    <location>
        <position position="65"/>
    </location>
</feature>
<feature type="sequence conflict" description="In Ref. 1; AA sequence." evidence="10" ref="1">
    <original>S</original>
    <variation>I</variation>
    <location>
        <position position="189"/>
    </location>
</feature>
<feature type="sequence conflict" description="In Ref. 3; AK225532." evidence="10" ref="3">
    <original>K</original>
    <variation>R</variation>
    <location sequence="P78346-2">
        <position position="291"/>
    </location>
</feature>
<organism>
    <name type="scientific">Homo sapiens</name>
    <name type="common">Human</name>
    <dbReference type="NCBI Taxonomy" id="9606"/>
    <lineage>
        <taxon>Eukaryota</taxon>
        <taxon>Metazoa</taxon>
        <taxon>Chordata</taxon>
        <taxon>Craniata</taxon>
        <taxon>Vertebrata</taxon>
        <taxon>Euteleostomi</taxon>
        <taxon>Mammalia</taxon>
        <taxon>Eutheria</taxon>
        <taxon>Euarchontoglires</taxon>
        <taxon>Primates</taxon>
        <taxon>Haplorrhini</taxon>
        <taxon>Catarrhini</taxon>
        <taxon>Hominidae</taxon>
        <taxon>Homo</taxon>
    </lineage>
</organism>